<reference key="1">
    <citation type="journal article" date="2004" name="Environ. Microbiol.">
        <title>The genome of Desulfotalea psychrophila, a sulfate-reducing bacterium from permanently cold Arctic sediments.</title>
        <authorList>
            <person name="Rabus R."/>
            <person name="Ruepp A."/>
            <person name="Frickey T."/>
            <person name="Rattei T."/>
            <person name="Fartmann B."/>
            <person name="Stark M."/>
            <person name="Bauer M."/>
            <person name="Zibat A."/>
            <person name="Lombardot T."/>
            <person name="Becker I."/>
            <person name="Amann J."/>
            <person name="Gellner K."/>
            <person name="Teeling H."/>
            <person name="Leuschner W.D."/>
            <person name="Gloeckner F.-O."/>
            <person name="Lupas A.N."/>
            <person name="Amann R."/>
            <person name="Klenk H.-P."/>
        </authorList>
    </citation>
    <scope>NUCLEOTIDE SEQUENCE [LARGE SCALE GENOMIC DNA]</scope>
    <source>
        <strain>DSM 12343 / LSv54</strain>
    </source>
</reference>
<feature type="chain" id="PRO_1000064647" description="Putative nickel insertion protein">
    <location>
        <begin position="1"/>
        <end position="389"/>
    </location>
</feature>
<organism>
    <name type="scientific">Desulfotalea psychrophila (strain LSv54 / DSM 12343)</name>
    <dbReference type="NCBI Taxonomy" id="177439"/>
    <lineage>
        <taxon>Bacteria</taxon>
        <taxon>Pseudomonadati</taxon>
        <taxon>Thermodesulfobacteriota</taxon>
        <taxon>Desulfobulbia</taxon>
        <taxon>Desulfobulbales</taxon>
        <taxon>Desulfocapsaceae</taxon>
        <taxon>Desulfotalea</taxon>
    </lineage>
</organism>
<name>Y748_DESPS</name>
<evidence type="ECO:0000255" key="1">
    <source>
        <dbReference type="HAMAP-Rule" id="MF_01074"/>
    </source>
</evidence>
<sequence>MSRICYLDCFSGVSGDMLLGAFLDAGVEVAALEAGLAALHLDDLILRTKRVEDCGLSAIKVDVDSSRRQNLRTLPDLLRILQESDLSSLVQERAALVFTAIASAEAKVHGTSLEQVHFHEIGALDTIADVVGVVLCLELLQIDQLVCSPLPQPRGFIDCAHGRIPLPAPAVCEILRGVPSYGVALEQELVTPTGAALVKALVGAFGQFPPMQQLAVGYGAGSQRLANGQPNLLRIFVGTPDDVLEEQQVEVIETNLDDWNPESYPYLCERLFEHGALDVSLAPIQMKKGRPGFCLQVIAGREDSAQLKDIVLLETTALGLRFRFEYRRTLPRRELHIESPWGTMRVKEVQRGGRRVIIPEYEECRRVAGEYDLPLQEVYGRIQGLNFYE</sequence>
<comment type="similarity">
    <text evidence="1">Belongs to the LarC family.</text>
</comment>
<dbReference type="EMBL" id="CR522870">
    <property type="protein sequence ID" value="CAG35477.1"/>
    <property type="molecule type" value="Genomic_DNA"/>
</dbReference>
<dbReference type="RefSeq" id="WP_011187993.1">
    <property type="nucleotide sequence ID" value="NC_006138.1"/>
</dbReference>
<dbReference type="SMR" id="Q6AQ96"/>
<dbReference type="STRING" id="177439.DP0748"/>
<dbReference type="KEGG" id="dps:DP0748"/>
<dbReference type="eggNOG" id="COG1641">
    <property type="taxonomic scope" value="Bacteria"/>
</dbReference>
<dbReference type="HOGENOM" id="CLU_028523_2_1_7"/>
<dbReference type="OrthoDB" id="9765625at2"/>
<dbReference type="Proteomes" id="UP000000602">
    <property type="component" value="Chromosome"/>
</dbReference>
<dbReference type="GO" id="GO:0016829">
    <property type="term" value="F:lyase activity"/>
    <property type="evidence" value="ECO:0007669"/>
    <property type="project" value="UniProtKB-UniRule"/>
</dbReference>
<dbReference type="GO" id="GO:0016151">
    <property type="term" value="F:nickel cation binding"/>
    <property type="evidence" value="ECO:0007669"/>
    <property type="project" value="UniProtKB-UniRule"/>
</dbReference>
<dbReference type="Gene3D" id="3.10.20.300">
    <property type="entry name" value="mk0293 like domain"/>
    <property type="match status" value="1"/>
</dbReference>
<dbReference type="Gene3D" id="3.30.70.1380">
    <property type="entry name" value="Transcriptional regulatory protein pf0864 domain like"/>
    <property type="match status" value="1"/>
</dbReference>
<dbReference type="HAMAP" id="MF_01074">
    <property type="entry name" value="LarC"/>
    <property type="match status" value="1"/>
</dbReference>
<dbReference type="InterPro" id="IPR002822">
    <property type="entry name" value="Ni_insertion"/>
</dbReference>
<dbReference type="NCBIfam" id="TIGR00299">
    <property type="entry name" value="nickel pincer cofactor biosynthesis protein LarC"/>
    <property type="match status" value="1"/>
</dbReference>
<dbReference type="PANTHER" id="PTHR36566">
    <property type="entry name" value="NICKEL INSERTION PROTEIN-RELATED"/>
    <property type="match status" value="1"/>
</dbReference>
<dbReference type="PANTHER" id="PTHR36566:SF1">
    <property type="entry name" value="PYRIDINIUM-3,5-BISTHIOCARBOXYLIC ACID MONONUCLEOTIDE NICKEL INSERTION PROTEIN"/>
    <property type="match status" value="1"/>
</dbReference>
<dbReference type="Pfam" id="PF01969">
    <property type="entry name" value="Ni_insertion"/>
    <property type="match status" value="1"/>
</dbReference>
<keyword id="KW-0533">Nickel</keyword>
<keyword id="KW-1185">Reference proteome</keyword>
<gene>
    <name type="ordered locus">DP0748</name>
</gene>
<protein>
    <recommendedName>
        <fullName evidence="1">Putative nickel insertion protein</fullName>
    </recommendedName>
</protein>
<proteinExistence type="inferred from homology"/>
<accession>Q6AQ96</accession>